<proteinExistence type="inferred from homology"/>
<sequence>MMMTRLETLKNNLQAAFGQDLALTESLGELTLEVAAEQWFSACTKLRTDPALRFESCIDLCGVDYLTWGNGTQPEEKTGPVTRGRYAVVVHLLSIEHNWRLRVRTWAPDDEFPMVSSLLECWPGVNWFEREAFDLYGIVFEGHPDLRRILTDYGFIGHPFRKDFPLSGTVEMRYDPEQKRVIYQPVTIDPREITPRVVREDSYGMGR</sequence>
<dbReference type="EC" id="7.1.1.-" evidence="1"/>
<dbReference type="EMBL" id="BX640413">
    <property type="protein sequence ID" value="CAE41146.1"/>
    <property type="molecule type" value="Genomic_DNA"/>
</dbReference>
<dbReference type="RefSeq" id="NP_879653.1">
    <property type="nucleotide sequence ID" value="NC_002929.2"/>
</dbReference>
<dbReference type="RefSeq" id="WP_010926963.1">
    <property type="nucleotide sequence ID" value="NZ_CP039022.1"/>
</dbReference>
<dbReference type="SMR" id="Q7VZQ3"/>
<dbReference type="STRING" id="257313.BP0843"/>
<dbReference type="PaxDb" id="257313-BP0843"/>
<dbReference type="KEGG" id="bpe:BP0843"/>
<dbReference type="PATRIC" id="fig|257313.5.peg.897"/>
<dbReference type="eggNOG" id="COG0852">
    <property type="taxonomic scope" value="Bacteria"/>
</dbReference>
<dbReference type="HOGENOM" id="CLU_042628_2_1_4"/>
<dbReference type="Proteomes" id="UP000002676">
    <property type="component" value="Chromosome"/>
</dbReference>
<dbReference type="GO" id="GO:0005886">
    <property type="term" value="C:plasma membrane"/>
    <property type="evidence" value="ECO:0007669"/>
    <property type="project" value="UniProtKB-SubCell"/>
</dbReference>
<dbReference type="GO" id="GO:0008137">
    <property type="term" value="F:NADH dehydrogenase (ubiquinone) activity"/>
    <property type="evidence" value="ECO:0007669"/>
    <property type="project" value="InterPro"/>
</dbReference>
<dbReference type="GO" id="GO:0050136">
    <property type="term" value="F:NADH:ubiquinone reductase (non-electrogenic) activity"/>
    <property type="evidence" value="ECO:0007669"/>
    <property type="project" value="UniProtKB-UniRule"/>
</dbReference>
<dbReference type="GO" id="GO:0048038">
    <property type="term" value="F:quinone binding"/>
    <property type="evidence" value="ECO:0007669"/>
    <property type="project" value="UniProtKB-KW"/>
</dbReference>
<dbReference type="Gene3D" id="3.30.460.80">
    <property type="entry name" value="NADH:ubiquinone oxidoreductase, 30kDa subunit"/>
    <property type="match status" value="1"/>
</dbReference>
<dbReference type="HAMAP" id="MF_01357">
    <property type="entry name" value="NDH1_NuoC"/>
    <property type="match status" value="1"/>
</dbReference>
<dbReference type="InterPro" id="IPR010218">
    <property type="entry name" value="NADH_DH_suC"/>
</dbReference>
<dbReference type="InterPro" id="IPR037232">
    <property type="entry name" value="NADH_quin_OxRdtase_su_C/D-like"/>
</dbReference>
<dbReference type="InterPro" id="IPR001268">
    <property type="entry name" value="NADH_UbQ_OxRdtase_30kDa_su"/>
</dbReference>
<dbReference type="InterPro" id="IPR020396">
    <property type="entry name" value="NADH_UbQ_OxRdtase_CS"/>
</dbReference>
<dbReference type="NCBIfam" id="TIGR01961">
    <property type="entry name" value="NuoC_fam"/>
    <property type="match status" value="1"/>
</dbReference>
<dbReference type="NCBIfam" id="NF004730">
    <property type="entry name" value="PRK06074.1-1"/>
    <property type="match status" value="1"/>
</dbReference>
<dbReference type="PANTHER" id="PTHR10884:SF14">
    <property type="entry name" value="NADH DEHYDROGENASE [UBIQUINONE] IRON-SULFUR PROTEIN 3, MITOCHONDRIAL"/>
    <property type="match status" value="1"/>
</dbReference>
<dbReference type="PANTHER" id="PTHR10884">
    <property type="entry name" value="NADH DEHYDROGENASE UBIQUINONE IRON-SULFUR PROTEIN 3"/>
    <property type="match status" value="1"/>
</dbReference>
<dbReference type="Pfam" id="PF00329">
    <property type="entry name" value="Complex1_30kDa"/>
    <property type="match status" value="1"/>
</dbReference>
<dbReference type="SUPFAM" id="SSF143243">
    <property type="entry name" value="Nqo5-like"/>
    <property type="match status" value="1"/>
</dbReference>
<dbReference type="PROSITE" id="PS00542">
    <property type="entry name" value="COMPLEX1_30K"/>
    <property type="match status" value="1"/>
</dbReference>
<reference key="1">
    <citation type="journal article" date="2003" name="Nat. Genet.">
        <title>Comparative analysis of the genome sequences of Bordetella pertussis, Bordetella parapertussis and Bordetella bronchiseptica.</title>
        <authorList>
            <person name="Parkhill J."/>
            <person name="Sebaihia M."/>
            <person name="Preston A."/>
            <person name="Murphy L.D."/>
            <person name="Thomson N.R."/>
            <person name="Harris D.E."/>
            <person name="Holden M.T.G."/>
            <person name="Churcher C.M."/>
            <person name="Bentley S.D."/>
            <person name="Mungall K.L."/>
            <person name="Cerdeno-Tarraga A.-M."/>
            <person name="Temple L."/>
            <person name="James K.D."/>
            <person name="Harris B."/>
            <person name="Quail M.A."/>
            <person name="Achtman M."/>
            <person name="Atkin R."/>
            <person name="Baker S."/>
            <person name="Basham D."/>
            <person name="Bason N."/>
            <person name="Cherevach I."/>
            <person name="Chillingworth T."/>
            <person name="Collins M."/>
            <person name="Cronin A."/>
            <person name="Davis P."/>
            <person name="Doggett J."/>
            <person name="Feltwell T."/>
            <person name="Goble A."/>
            <person name="Hamlin N."/>
            <person name="Hauser H."/>
            <person name="Holroyd S."/>
            <person name="Jagels K."/>
            <person name="Leather S."/>
            <person name="Moule S."/>
            <person name="Norberczak H."/>
            <person name="O'Neil S."/>
            <person name="Ormond D."/>
            <person name="Price C."/>
            <person name="Rabbinowitsch E."/>
            <person name="Rutter S."/>
            <person name="Sanders M."/>
            <person name="Saunders D."/>
            <person name="Seeger K."/>
            <person name="Sharp S."/>
            <person name="Simmonds M."/>
            <person name="Skelton J."/>
            <person name="Squares R."/>
            <person name="Squares S."/>
            <person name="Stevens K."/>
            <person name="Unwin L."/>
            <person name="Whitehead S."/>
            <person name="Barrell B.G."/>
            <person name="Maskell D.J."/>
        </authorList>
    </citation>
    <scope>NUCLEOTIDE SEQUENCE [LARGE SCALE GENOMIC DNA]</scope>
    <source>
        <strain>Tohama I / ATCC BAA-589 / NCTC 13251</strain>
    </source>
</reference>
<name>NUOC_BORPE</name>
<comment type="function">
    <text evidence="1">NDH-1 shuttles electrons from NADH, via FMN and iron-sulfur (Fe-S) centers, to quinones in the respiratory chain. The immediate electron acceptor for the enzyme in this species is believed to be ubiquinone. Couples the redox reaction to proton translocation (for every two electrons transferred, four hydrogen ions are translocated across the cytoplasmic membrane), and thus conserves the redox energy in a proton gradient.</text>
</comment>
<comment type="catalytic activity">
    <reaction evidence="1">
        <text>a quinone + NADH + 5 H(+)(in) = a quinol + NAD(+) + 4 H(+)(out)</text>
        <dbReference type="Rhea" id="RHEA:57888"/>
        <dbReference type="ChEBI" id="CHEBI:15378"/>
        <dbReference type="ChEBI" id="CHEBI:24646"/>
        <dbReference type="ChEBI" id="CHEBI:57540"/>
        <dbReference type="ChEBI" id="CHEBI:57945"/>
        <dbReference type="ChEBI" id="CHEBI:132124"/>
    </reaction>
</comment>
<comment type="subunit">
    <text evidence="1">NDH-1 is composed of 14 different subunits. Subunits NuoB, C, D, E, F, and G constitute the peripheral sector of the complex.</text>
</comment>
<comment type="subcellular location">
    <subcellularLocation>
        <location evidence="1">Cell inner membrane</location>
        <topology evidence="1">Peripheral membrane protein</topology>
        <orientation evidence="1">Cytoplasmic side</orientation>
    </subcellularLocation>
</comment>
<comment type="similarity">
    <text evidence="1">Belongs to the complex I 30 kDa subunit family.</text>
</comment>
<gene>
    <name evidence="1" type="primary">nuoC</name>
    <name type="ordered locus">BP0843</name>
</gene>
<feature type="chain" id="PRO_0000358048" description="NADH-quinone oxidoreductase subunit C">
    <location>
        <begin position="1"/>
        <end position="207"/>
    </location>
</feature>
<protein>
    <recommendedName>
        <fullName evidence="1">NADH-quinone oxidoreductase subunit C</fullName>
        <ecNumber evidence="1">7.1.1.-</ecNumber>
    </recommendedName>
    <alternativeName>
        <fullName evidence="1">NADH dehydrogenase I subunit C</fullName>
    </alternativeName>
    <alternativeName>
        <fullName evidence="1">NDH-1 subunit C</fullName>
    </alternativeName>
</protein>
<evidence type="ECO:0000255" key="1">
    <source>
        <dbReference type="HAMAP-Rule" id="MF_01357"/>
    </source>
</evidence>
<organism>
    <name type="scientific">Bordetella pertussis (strain Tohama I / ATCC BAA-589 / NCTC 13251)</name>
    <dbReference type="NCBI Taxonomy" id="257313"/>
    <lineage>
        <taxon>Bacteria</taxon>
        <taxon>Pseudomonadati</taxon>
        <taxon>Pseudomonadota</taxon>
        <taxon>Betaproteobacteria</taxon>
        <taxon>Burkholderiales</taxon>
        <taxon>Alcaligenaceae</taxon>
        <taxon>Bordetella</taxon>
    </lineage>
</organism>
<keyword id="KW-0997">Cell inner membrane</keyword>
<keyword id="KW-1003">Cell membrane</keyword>
<keyword id="KW-0472">Membrane</keyword>
<keyword id="KW-0520">NAD</keyword>
<keyword id="KW-0874">Quinone</keyword>
<keyword id="KW-1185">Reference proteome</keyword>
<keyword id="KW-1278">Translocase</keyword>
<keyword id="KW-0813">Transport</keyword>
<keyword id="KW-0830">Ubiquinone</keyword>
<accession>Q7VZQ3</accession>